<comment type="function">
    <text evidence="1">Capsid protein (CA) is the structural component of the virus-like particle (VLP), forming the shell that encapsulates the retrotransposons dimeric RNA genome. The particles are assembled from trimer-clustered units and there are holes in the capsid shells that allow for the diffusion of macromolecules. CA also has nucleocapsid-like chaperone activity, promoting primer tRNA(i)-Met annealing to the multipartite primer-binding site (PBS), dimerization of Ty1 RNA and initiation of reverse transcription (By similarity).</text>
</comment>
<comment type="subunit">
    <text evidence="1">Homotrimer.</text>
</comment>
<comment type="subcellular location">
    <subcellularLocation>
        <location evidence="1">Cytoplasm</location>
    </subcellularLocation>
</comment>
<comment type="alternative products">
    <event type="ribosomal frameshifting"/>
    <isoform>
        <id>P47099-1</id>
        <name>Transposon Ty1-JR2 Gag polyprotein</name>
        <sequence type="displayed"/>
    </isoform>
    <isoform>
        <id>P47100-1</id>
        <name>Transposon Ty1-JR2 Gag-Pol polyprotein</name>
        <sequence type="external"/>
    </isoform>
    <text evidence="1">The Gag-Pol polyprotein is generated by a +1 ribosomal frameshift. The ratio of Gag:Gag-Pol varies between 20:1 and 5:1 (By similarity).</text>
</comment>
<comment type="induction">
    <text evidence="4">Ty1-JR2 is a highly expressed element. Induced under amino acid starvation conditions by GCN4.</text>
</comment>
<comment type="domain">
    <text evidence="1">The C-terminal RNA-binding region of CA is sufficient for all its nucleocapsid-like chaperone activities.</text>
</comment>
<comment type="miscellaneous">
    <text>Retrotransposons are mobile genetic entities that are able to replicate via an RNA intermediate and a reverse transcription step. In contrast to retroviruses, retrotransposons are non-infectious, lack an envelope and remain intracellular. Ty1 retrotransposons belong to the copia elements (pseudoviridae).</text>
</comment>
<comment type="miscellaneous">
    <molecule>Isoform Transposon Ty1-JR2 Gag polyprotein</molecule>
    <text>Produced by conventional translation.</text>
</comment>
<reference key="1">
    <citation type="journal article" date="1995" name="Yeast">
        <title>The sequence of 24.3 kb from chromosome X reveals five complete open reading frames, all of which correspond to new genes, and a tandem insertion of a Ty1 transposon.</title>
        <authorList>
            <person name="Zagulski M."/>
            <person name="Babinska B."/>
            <person name="Gromadka R."/>
            <person name="Migdalski A."/>
            <person name="Rytka J."/>
            <person name="Sulicka J."/>
            <person name="Herbert C.J."/>
        </authorList>
    </citation>
    <scope>NUCLEOTIDE SEQUENCE [GENOMIC DNA]</scope>
</reference>
<reference key="2">
    <citation type="journal article" date="1996" name="EMBO J.">
        <title>Complete nucleotide sequence of Saccharomyces cerevisiae chromosome X.</title>
        <authorList>
            <person name="Galibert F."/>
            <person name="Alexandraki D."/>
            <person name="Baur A."/>
            <person name="Boles E."/>
            <person name="Chalwatzis N."/>
            <person name="Chuat J.-C."/>
            <person name="Coster F."/>
            <person name="Cziepluch C."/>
            <person name="de Haan M."/>
            <person name="Domdey H."/>
            <person name="Durand P."/>
            <person name="Entian K.-D."/>
            <person name="Gatius M."/>
            <person name="Goffeau A."/>
            <person name="Grivell L.A."/>
            <person name="Hennemann A."/>
            <person name="Herbert C.J."/>
            <person name="Heumann K."/>
            <person name="Hilger F."/>
            <person name="Hollenberg C.P."/>
            <person name="Huang M.-E."/>
            <person name="Jacq C."/>
            <person name="Jauniaux J.-C."/>
            <person name="Katsoulou C."/>
            <person name="Kirchrath L."/>
            <person name="Kleine K."/>
            <person name="Kordes E."/>
            <person name="Koetter P."/>
            <person name="Liebl S."/>
            <person name="Louis E.J."/>
            <person name="Manus V."/>
            <person name="Mewes H.-W."/>
            <person name="Miosga T."/>
            <person name="Obermaier B."/>
            <person name="Perea J."/>
            <person name="Pohl T.M."/>
            <person name="Portetelle D."/>
            <person name="Pujol A."/>
            <person name="Purnelle B."/>
            <person name="Ramezani Rad M."/>
            <person name="Rasmussen S.W."/>
            <person name="Rose M."/>
            <person name="Rossau R."/>
            <person name="Schaaff-Gerstenschlaeger I."/>
            <person name="Smits P.H.M."/>
            <person name="Scarcez T."/>
            <person name="Soriano N."/>
            <person name="To Van D."/>
            <person name="Tzermia M."/>
            <person name="Van Broekhoven A."/>
            <person name="Vandenbol M."/>
            <person name="Wedler H."/>
            <person name="von Wettstein D."/>
            <person name="Wambutt R."/>
            <person name="Zagulski M."/>
            <person name="Zollner A."/>
            <person name="Karpfinger-Hartl L."/>
        </authorList>
    </citation>
    <scope>NUCLEOTIDE SEQUENCE [LARGE SCALE GENOMIC DNA]</scope>
    <source>
        <strain>ATCC 204508 / S288c</strain>
    </source>
</reference>
<reference key="3">
    <citation type="journal article" date="2014" name="G3 (Bethesda)">
        <title>The reference genome sequence of Saccharomyces cerevisiae: Then and now.</title>
        <authorList>
            <person name="Engel S.R."/>
            <person name="Dietrich F.S."/>
            <person name="Fisk D.G."/>
            <person name="Binkley G."/>
            <person name="Balakrishnan R."/>
            <person name="Costanzo M.C."/>
            <person name="Dwight S.S."/>
            <person name="Hitz B.C."/>
            <person name="Karra K."/>
            <person name="Nash R.S."/>
            <person name="Weng S."/>
            <person name="Wong E.D."/>
            <person name="Lloyd P."/>
            <person name="Skrzypek M.S."/>
            <person name="Miyasato S.R."/>
            <person name="Simison M."/>
            <person name="Cherry J.M."/>
        </authorList>
    </citation>
    <scope>GENOME REANNOTATION</scope>
    <source>
        <strain>ATCC 204508 / S288c</strain>
    </source>
</reference>
<reference key="4">
    <citation type="journal article" date="1998" name="Genome Res.">
        <title>Transposable elements and genome organization: a comprehensive survey of retrotransposons revealed by the complete Saccharomyces cerevisiae genome sequence.</title>
        <authorList>
            <person name="Kim J.M."/>
            <person name="Vanguri S."/>
            <person name="Boeke J.D."/>
            <person name="Gabriel A."/>
            <person name="Voytas D.F."/>
        </authorList>
    </citation>
    <scope>NOMENCLATURE</scope>
</reference>
<reference key="5">
    <citation type="journal article" date="2002" name="Mol. Cell. Biol.">
        <title>Differential effects of chromatin and Gcn4 on the 50-fold range of expression among individual yeast Ty1 retrotransposons.</title>
        <authorList>
            <person name="Morillon A."/>
            <person name="Benard L."/>
            <person name="Springer M."/>
            <person name="Lesage P."/>
        </authorList>
    </citation>
    <scope>INDUCTION</scope>
</reference>
<reference key="6">
    <citation type="journal article" date="2005" name="Cytogenet. Genome Res.">
        <title>Happy together: the life and times of Ty retrotransposons and their hosts.</title>
        <authorList>
            <person name="Lesage P."/>
            <person name="Todeschini A.L."/>
        </authorList>
    </citation>
    <scope>REVIEW</scope>
</reference>
<name>YJ12A_YEAST</name>
<evidence type="ECO:0000250" key="1"/>
<evidence type="ECO:0000250" key="2">
    <source>
        <dbReference type="UniProtKB" id="Q12441"/>
    </source>
</evidence>
<evidence type="ECO:0000256" key="3">
    <source>
        <dbReference type="SAM" id="MobiDB-lite"/>
    </source>
</evidence>
<evidence type="ECO:0000269" key="4">
    <source>
    </source>
</evidence>
<gene>
    <name type="primary">TY1A-JR2</name>
    <name type="synonym">YJRWTy1-2 GAG</name>
    <name type="ordered locus">YJR028W</name>
    <name type="ORF">J1565</name>
</gene>
<feature type="chain" id="PRO_0000203497" description="Transposon Ty1-JR2 Gag polyprotein">
    <location>
        <begin position="1"/>
        <end position="440"/>
    </location>
</feature>
<feature type="chain" id="PRO_0000279092" description="Capsid protein" evidence="1">
    <location>
        <begin position="1"/>
        <end position="401"/>
    </location>
</feature>
<feature type="peptide" id="PRO_0000279093" description="Gag-p4" evidence="1">
    <location>
        <begin position="402"/>
        <end position="440"/>
    </location>
</feature>
<feature type="region of interest" description="Disordered" evidence="3">
    <location>
        <begin position="1"/>
        <end position="93"/>
    </location>
</feature>
<feature type="region of interest" description="Disordered" evidence="3">
    <location>
        <begin position="126"/>
        <end position="173"/>
    </location>
</feature>
<feature type="region of interest" description="RNA-binding" evidence="1">
    <location>
        <begin position="299"/>
        <end position="401"/>
    </location>
</feature>
<feature type="region of interest" description="Disordered" evidence="3">
    <location>
        <begin position="352"/>
        <end position="440"/>
    </location>
</feature>
<feature type="compositionally biased region" description="Low complexity" evidence="3">
    <location>
        <begin position="1"/>
        <end position="16"/>
    </location>
</feature>
<feature type="compositionally biased region" description="Polar residues" evidence="3">
    <location>
        <begin position="48"/>
        <end position="60"/>
    </location>
</feature>
<feature type="compositionally biased region" description="Polar residues" evidence="3">
    <location>
        <begin position="71"/>
        <end position="93"/>
    </location>
</feature>
<feature type="compositionally biased region" description="Polar residues" evidence="3">
    <location>
        <begin position="127"/>
        <end position="152"/>
    </location>
</feature>
<feature type="compositionally biased region" description="Low complexity" evidence="3">
    <location>
        <begin position="153"/>
        <end position="165"/>
    </location>
</feature>
<feature type="compositionally biased region" description="Low complexity" evidence="3">
    <location>
        <begin position="402"/>
        <end position="418"/>
    </location>
</feature>
<feature type="compositionally biased region" description="Polar residues" evidence="3">
    <location>
        <begin position="419"/>
        <end position="428"/>
    </location>
</feature>
<feature type="compositionally biased region" description="Basic and acidic residues" evidence="3">
    <location>
        <begin position="429"/>
        <end position="440"/>
    </location>
</feature>
<feature type="site" description="Cleavage; by Ty1 protease" evidence="1">
    <location>
        <begin position="401"/>
        <end position="402"/>
    </location>
</feature>
<feature type="modified residue" description="Phosphoserine" evidence="2">
    <location>
        <position position="416"/>
    </location>
</feature>
<accession>P47099</accession>
<accession>D6VWK2</accession>
<sequence length="440" mass="49112">MESQQLSQHSHISHGSACASVTSKEVHTNQDPLDVSASKTEECEKASTKANSQQTTTPASSAVPENPHHASPQTAQSHSPQNGPYPQQCMMTQNQANPSGWSFYGHPSMIPYTPYQMSPMYFPPGPQSQFPQYPSSVGTPLSTPSPESGNTFTDSSSADSDMTSTKKYVRPPPMLTSPNDFPNWVKTYIKFLQNSNLGGIIPTVNGKPVRQITDDELTFLYNTFQIFAPSQFLPTWVKDILSVDYTDIMKILSKSIEKMQSDTQEANDIVTLANLQYNGSTPADAFETKVTNIIDRLNNNGIHINNKVACQLIMRGLSGEYKFLRYTRHRHLNMTVAELFLDIHAIYEEQQGSRNSKPNYRRNPSDEKNDSRSYTNTTKPKVIARNPQKTNNSKSKTARAHNVSTSNNSPSTDNDSISKSTTEPIQLNNKHDLHLRPETY</sequence>
<organism>
    <name type="scientific">Saccharomyces cerevisiae (strain ATCC 204508 / S288c)</name>
    <name type="common">Baker's yeast</name>
    <dbReference type="NCBI Taxonomy" id="559292"/>
    <lineage>
        <taxon>Eukaryota</taxon>
        <taxon>Fungi</taxon>
        <taxon>Dikarya</taxon>
        <taxon>Ascomycota</taxon>
        <taxon>Saccharomycotina</taxon>
        <taxon>Saccharomycetes</taxon>
        <taxon>Saccharomycetales</taxon>
        <taxon>Saccharomycetaceae</taxon>
        <taxon>Saccharomyces</taxon>
    </lineage>
</organism>
<protein>
    <recommendedName>
        <fullName>Transposon Ty1-JR2 Gag polyprotein</fullName>
    </recommendedName>
    <alternativeName>
        <fullName>Gag-p49</fullName>
    </alternativeName>
    <alternativeName>
        <fullName>Transposon Ty1 protein A</fullName>
        <shortName>TY1A</shortName>
        <shortName>TYA</shortName>
    </alternativeName>
    <alternativeName>
        <fullName>p58</fullName>
    </alternativeName>
    <component>
        <recommendedName>
            <fullName>Capsid protein</fullName>
            <shortName>CA</shortName>
        </recommendedName>
        <alternativeName>
            <fullName>Gag-p45</fullName>
        </alternativeName>
        <alternativeName>
            <fullName>p54</fullName>
        </alternativeName>
    </component>
    <component>
        <recommendedName>
            <fullName>Gag-p4</fullName>
        </recommendedName>
    </component>
</protein>
<dbReference type="EMBL" id="X87297">
    <property type="protein sequence ID" value="CAA60722.1"/>
    <property type="molecule type" value="Genomic_DNA"/>
</dbReference>
<dbReference type="EMBL" id="Z49528">
    <property type="protein sequence ID" value="CAA89555.1"/>
    <property type="molecule type" value="Genomic_DNA"/>
</dbReference>
<dbReference type="EMBL" id="BK006943">
    <property type="protein sequence ID" value="DAA08818.1"/>
    <property type="molecule type" value="Genomic_DNA"/>
</dbReference>
<dbReference type="PIR" id="S57046">
    <property type="entry name" value="S57046"/>
</dbReference>
<dbReference type="RefSeq" id="NP_012563.1">
    <molecule id="P47099-1"/>
    <property type="nucleotide sequence ID" value="NM_001181686.1"/>
</dbReference>
<dbReference type="SMR" id="P47099"/>
<dbReference type="BioGRID" id="33781">
    <property type="interactions" value="5"/>
</dbReference>
<dbReference type="DIP" id="DIP-6395N"/>
<dbReference type="FunCoup" id="P47099">
    <property type="interactions" value="109"/>
</dbReference>
<dbReference type="IntAct" id="P47099">
    <property type="interactions" value="4"/>
</dbReference>
<dbReference type="GlyGen" id="P47099">
    <property type="glycosylation" value="3 sites, 1 O-linked glycan (1 site)"/>
</dbReference>
<dbReference type="PaxDb" id="4932-YJR028W"/>
<dbReference type="PeptideAtlas" id="P47099"/>
<dbReference type="GeneID" id="853485"/>
<dbReference type="KEGG" id="sce:YJR028W"/>
<dbReference type="AGR" id="SGD:S000003789"/>
<dbReference type="SGD" id="S000003789">
    <property type="gene designation" value="YJR028W"/>
</dbReference>
<dbReference type="VEuPathDB" id="FungiDB:YJR028W"/>
<dbReference type="eggNOG" id="KOG0017">
    <property type="taxonomic scope" value="Eukaryota"/>
</dbReference>
<dbReference type="HOGENOM" id="CLU_045291_1_0_1"/>
<dbReference type="InParanoid" id="P47099"/>
<dbReference type="OrthoDB" id="4051386at2759"/>
<dbReference type="Proteomes" id="UP000002311">
    <property type="component" value="Chromosome X"/>
</dbReference>
<dbReference type="RNAct" id="P47099">
    <property type="molecule type" value="protein"/>
</dbReference>
<dbReference type="GO" id="GO:0005737">
    <property type="term" value="C:cytoplasm"/>
    <property type="evidence" value="ECO:0007669"/>
    <property type="project" value="UniProtKB-SubCell"/>
</dbReference>
<dbReference type="GO" id="GO:0003723">
    <property type="term" value="F:RNA binding"/>
    <property type="evidence" value="ECO:0007669"/>
    <property type="project" value="UniProtKB-KW"/>
</dbReference>
<dbReference type="GO" id="GO:0075523">
    <property type="term" value="P:viral translational frameshifting"/>
    <property type="evidence" value="ECO:0007669"/>
    <property type="project" value="UniProtKB-KW"/>
</dbReference>
<dbReference type="InterPro" id="IPR015820">
    <property type="entry name" value="TYA"/>
</dbReference>
<dbReference type="Pfam" id="PF01021">
    <property type="entry name" value="TYA"/>
    <property type="match status" value="1"/>
</dbReference>
<proteinExistence type="evidence at transcript level"/>
<keyword id="KW-0963">Cytoplasm</keyword>
<keyword id="KW-0597">Phosphoprotein</keyword>
<keyword id="KW-1185">Reference proteome</keyword>
<keyword id="KW-0688">Ribosomal frameshifting</keyword>
<keyword id="KW-0694">RNA-binding</keyword>
<keyword id="KW-0814">Transposable element</keyword>